<accession>Q86X60</accession>
<accession>B2RPQ5</accession>
<accession>Q5QP15</accession>
<keyword id="KW-0025">Alternative splicing</keyword>
<keyword id="KW-1185">Reference proteome</keyword>
<organism>
    <name type="scientific">Homo sapiens</name>
    <name type="common">Human</name>
    <dbReference type="NCBI Taxonomy" id="9606"/>
    <lineage>
        <taxon>Eukaryota</taxon>
        <taxon>Metazoa</taxon>
        <taxon>Chordata</taxon>
        <taxon>Craniata</taxon>
        <taxon>Vertebrata</taxon>
        <taxon>Euteleostomi</taxon>
        <taxon>Mammalia</taxon>
        <taxon>Eutheria</taxon>
        <taxon>Euarchontoglires</taxon>
        <taxon>Primates</taxon>
        <taxon>Haplorrhini</taxon>
        <taxon>Catarrhini</taxon>
        <taxon>Hominidae</taxon>
        <taxon>Homo</taxon>
    </lineage>
</organism>
<feature type="chain" id="PRO_0000340258" description="Protein FAM72B">
    <location>
        <begin position="1"/>
        <end position="149"/>
    </location>
</feature>
<feature type="splice variant" id="VSP_034206" description="In isoform 2." evidence="1">
    <original>RCVSILCCKFCKQVLSSRGMKAVLLADTEIDLFSTDIPPTN</original>
    <variation>S</variation>
    <location>
        <begin position="11"/>
        <end position="51"/>
    </location>
</feature>
<feature type="sequence variant" id="VAR_044011" description="In dbSNP:rs17838150.">
    <original>G</original>
    <variation>V</variation>
    <location>
        <position position="82"/>
    </location>
</feature>
<feature type="sequence variant" id="VAR_044012" description="In dbSNP:rs1572701.">
    <original>P</original>
    <variation>L</variation>
    <location>
        <position position="94"/>
    </location>
</feature>
<comment type="interaction">
    <interactant intactId="EBI-12886238">
        <id>Q86X60-2</id>
    </interactant>
    <interactant intactId="EBI-10981970">
        <id>Q5T749</id>
        <label>KPRP</label>
    </interactant>
    <organismsDiffer>false</organismsDiffer>
    <experiments>3</experiments>
</comment>
<comment type="interaction">
    <interactant intactId="EBI-12886238">
        <id>Q86X60-2</id>
    </interactant>
    <interactant intactId="EBI-740446">
        <id>P32242</id>
        <label>OTX1</label>
    </interactant>
    <organismsDiffer>false</organismsDiffer>
    <experiments>3</experiments>
</comment>
<comment type="alternative products">
    <event type="alternative splicing"/>
    <isoform>
        <id>Q86X60-1</id>
        <name>1</name>
        <sequence type="displayed"/>
    </isoform>
    <isoform>
        <id>Q86X60-2</id>
        <name>2</name>
        <sequence type="described" ref="VSP_034206"/>
    </isoform>
</comment>
<comment type="miscellaneous">
    <text>Highly homologous to GCUD2 but localized to a distinct locus.</text>
</comment>
<comment type="similarity">
    <text evidence="2">Belongs to the FAM72 family.</text>
</comment>
<reference key="1">
    <citation type="journal article" date="2006" name="Nature">
        <title>The DNA sequence and biological annotation of human chromosome 1.</title>
        <authorList>
            <person name="Gregory S.G."/>
            <person name="Barlow K.F."/>
            <person name="McLay K.E."/>
            <person name="Kaul R."/>
            <person name="Swarbreck D."/>
            <person name="Dunham A."/>
            <person name="Scott C.E."/>
            <person name="Howe K.L."/>
            <person name="Woodfine K."/>
            <person name="Spencer C.C.A."/>
            <person name="Jones M.C."/>
            <person name="Gillson C."/>
            <person name="Searle S."/>
            <person name="Zhou Y."/>
            <person name="Kokocinski F."/>
            <person name="McDonald L."/>
            <person name="Evans R."/>
            <person name="Phillips K."/>
            <person name="Atkinson A."/>
            <person name="Cooper R."/>
            <person name="Jones C."/>
            <person name="Hall R.E."/>
            <person name="Andrews T.D."/>
            <person name="Lloyd C."/>
            <person name="Ainscough R."/>
            <person name="Almeida J.P."/>
            <person name="Ambrose K.D."/>
            <person name="Anderson F."/>
            <person name="Andrew R.W."/>
            <person name="Ashwell R.I.S."/>
            <person name="Aubin K."/>
            <person name="Babbage A.K."/>
            <person name="Bagguley C.L."/>
            <person name="Bailey J."/>
            <person name="Beasley H."/>
            <person name="Bethel G."/>
            <person name="Bird C.P."/>
            <person name="Bray-Allen S."/>
            <person name="Brown J.Y."/>
            <person name="Brown A.J."/>
            <person name="Buckley D."/>
            <person name="Burton J."/>
            <person name="Bye J."/>
            <person name="Carder C."/>
            <person name="Chapman J.C."/>
            <person name="Clark S.Y."/>
            <person name="Clarke G."/>
            <person name="Clee C."/>
            <person name="Cobley V."/>
            <person name="Collier R.E."/>
            <person name="Corby N."/>
            <person name="Coville G.J."/>
            <person name="Davies J."/>
            <person name="Deadman R."/>
            <person name="Dunn M."/>
            <person name="Earthrowl M."/>
            <person name="Ellington A.G."/>
            <person name="Errington H."/>
            <person name="Frankish A."/>
            <person name="Frankland J."/>
            <person name="French L."/>
            <person name="Garner P."/>
            <person name="Garnett J."/>
            <person name="Gay L."/>
            <person name="Ghori M.R.J."/>
            <person name="Gibson R."/>
            <person name="Gilby L.M."/>
            <person name="Gillett W."/>
            <person name="Glithero R.J."/>
            <person name="Grafham D.V."/>
            <person name="Griffiths C."/>
            <person name="Griffiths-Jones S."/>
            <person name="Grocock R."/>
            <person name="Hammond S."/>
            <person name="Harrison E.S.I."/>
            <person name="Hart E."/>
            <person name="Haugen E."/>
            <person name="Heath P.D."/>
            <person name="Holmes S."/>
            <person name="Holt K."/>
            <person name="Howden P.J."/>
            <person name="Hunt A.R."/>
            <person name="Hunt S.E."/>
            <person name="Hunter G."/>
            <person name="Isherwood J."/>
            <person name="James R."/>
            <person name="Johnson C."/>
            <person name="Johnson D."/>
            <person name="Joy A."/>
            <person name="Kay M."/>
            <person name="Kershaw J.K."/>
            <person name="Kibukawa M."/>
            <person name="Kimberley A.M."/>
            <person name="King A."/>
            <person name="Knights A.J."/>
            <person name="Lad H."/>
            <person name="Laird G."/>
            <person name="Lawlor S."/>
            <person name="Leongamornlert D.A."/>
            <person name="Lloyd D.M."/>
            <person name="Loveland J."/>
            <person name="Lovell J."/>
            <person name="Lush M.J."/>
            <person name="Lyne R."/>
            <person name="Martin S."/>
            <person name="Mashreghi-Mohammadi M."/>
            <person name="Matthews L."/>
            <person name="Matthews N.S.W."/>
            <person name="McLaren S."/>
            <person name="Milne S."/>
            <person name="Mistry S."/>
            <person name="Moore M.J.F."/>
            <person name="Nickerson T."/>
            <person name="O'Dell C.N."/>
            <person name="Oliver K."/>
            <person name="Palmeiri A."/>
            <person name="Palmer S.A."/>
            <person name="Parker A."/>
            <person name="Patel D."/>
            <person name="Pearce A.V."/>
            <person name="Peck A.I."/>
            <person name="Pelan S."/>
            <person name="Phelps K."/>
            <person name="Phillimore B.J."/>
            <person name="Plumb R."/>
            <person name="Rajan J."/>
            <person name="Raymond C."/>
            <person name="Rouse G."/>
            <person name="Saenphimmachak C."/>
            <person name="Sehra H.K."/>
            <person name="Sheridan E."/>
            <person name="Shownkeen R."/>
            <person name="Sims S."/>
            <person name="Skuce C.D."/>
            <person name="Smith M."/>
            <person name="Steward C."/>
            <person name="Subramanian S."/>
            <person name="Sycamore N."/>
            <person name="Tracey A."/>
            <person name="Tromans A."/>
            <person name="Van Helmond Z."/>
            <person name="Wall M."/>
            <person name="Wallis J.M."/>
            <person name="White S."/>
            <person name="Whitehead S.L."/>
            <person name="Wilkinson J.E."/>
            <person name="Willey D.L."/>
            <person name="Williams H."/>
            <person name="Wilming L."/>
            <person name="Wray P.W."/>
            <person name="Wu Z."/>
            <person name="Coulson A."/>
            <person name="Vaudin M."/>
            <person name="Sulston J.E."/>
            <person name="Durbin R.M."/>
            <person name="Hubbard T."/>
            <person name="Wooster R."/>
            <person name="Dunham I."/>
            <person name="Carter N.P."/>
            <person name="McVean G."/>
            <person name="Ross M.T."/>
            <person name="Harrow J."/>
            <person name="Olson M.V."/>
            <person name="Beck S."/>
            <person name="Rogers J."/>
            <person name="Bentley D.R."/>
        </authorList>
    </citation>
    <scope>NUCLEOTIDE SEQUENCE [LARGE SCALE GENOMIC DNA]</scope>
</reference>
<reference key="2">
    <citation type="journal article" date="2004" name="Genome Res.">
        <title>The status, quality, and expansion of the NIH full-length cDNA project: the Mammalian Gene Collection (MGC).</title>
        <authorList>
            <consortium name="The MGC Project Team"/>
        </authorList>
    </citation>
    <scope>NUCLEOTIDE SEQUENCE [LARGE SCALE MRNA] (ISOFORMS 1 AND 2)</scope>
    <source>
        <tissue>Lung</tissue>
        <tissue>Skin</tissue>
    </source>
</reference>
<protein>
    <recommendedName>
        <fullName>Protein FAM72B</fullName>
    </recommendedName>
</protein>
<name>FA72B_HUMAN</name>
<gene>
    <name type="primary">FAM72B</name>
</gene>
<evidence type="ECO:0000303" key="1">
    <source>
    </source>
</evidence>
<evidence type="ECO:0000305" key="2"/>
<sequence length="149" mass="16617">MSTNICSFKDRCVSILCCKFCKQVLSSRGMKAVLLADTEIDLFSTDIPPTNAVDFTGRCYFTKICKCKLKDIACLKCGNIVGYHVIVPCSSCLPSCNNGHFWMFHSQAVYDINRLDSTGVNILLWGNLPEIEESTDEDVLNISAEECIR</sequence>
<dbReference type="EMBL" id="AL357493">
    <property type="protein sequence ID" value="CAI14136.1"/>
    <property type="molecule type" value="Genomic_DNA"/>
</dbReference>
<dbReference type="EMBL" id="AL357493">
    <property type="protein sequence ID" value="CAI14137.1"/>
    <property type="molecule type" value="Genomic_DNA"/>
</dbReference>
<dbReference type="EMBL" id="BC046199">
    <property type="protein sequence ID" value="AAH46199.1"/>
    <property type="molecule type" value="mRNA"/>
</dbReference>
<dbReference type="EMBL" id="BC137546">
    <property type="protein sequence ID" value="AAI37547.1"/>
    <property type="molecule type" value="mRNA"/>
</dbReference>
<dbReference type="CCDS" id="CCDS72848.1">
    <molecule id="Q86X60-1"/>
</dbReference>
<dbReference type="CCDS" id="CCDS81362.1">
    <molecule id="Q86X60-2"/>
</dbReference>
<dbReference type="RefSeq" id="NP_001094380.1">
    <molecule id="Q86X60-1"/>
    <property type="nucleotide sequence ID" value="NM_001100910.2"/>
</dbReference>
<dbReference type="RefSeq" id="NP_001307078.1">
    <molecule id="Q86X60-2"/>
    <property type="nucleotide sequence ID" value="NM_001320149.2"/>
</dbReference>
<dbReference type="BioGRID" id="576100">
    <property type="interactions" value="2"/>
</dbReference>
<dbReference type="FunCoup" id="Q86X60">
    <property type="interactions" value="969"/>
</dbReference>
<dbReference type="IntAct" id="Q86X60">
    <property type="interactions" value="2"/>
</dbReference>
<dbReference type="STRING" id="9606.ENSP00000358397"/>
<dbReference type="iPTMnet" id="Q86X60"/>
<dbReference type="PhosphoSitePlus" id="Q86X60"/>
<dbReference type="BioMuta" id="FAM72B"/>
<dbReference type="DMDM" id="190359324"/>
<dbReference type="MassIVE" id="Q86X60"/>
<dbReference type="PaxDb" id="9606-ENSP00000358397"/>
<dbReference type="PeptideAtlas" id="Q86X60"/>
<dbReference type="DNASU" id="653820"/>
<dbReference type="Ensembl" id="ENST00000355228.8">
    <molecule id="Q86X60-2"/>
    <property type="protein sequence ID" value="ENSP00000347368.4"/>
    <property type="gene ID" value="ENSG00000188610.12"/>
</dbReference>
<dbReference type="Ensembl" id="ENST00000369390.7">
    <molecule id="Q86X60-1"/>
    <property type="protein sequence ID" value="ENSP00000358397.3"/>
    <property type="gene ID" value="ENSG00000188610.12"/>
</dbReference>
<dbReference type="GeneID" id="653820"/>
<dbReference type="KEGG" id="hsa:653820"/>
<dbReference type="MANE-Select" id="ENST00000369390.7">
    <property type="protein sequence ID" value="ENSP00000358397.3"/>
    <property type="RefSeq nucleotide sequence ID" value="NM_001100910.2"/>
    <property type="RefSeq protein sequence ID" value="NP_001094380.1"/>
</dbReference>
<dbReference type="UCSC" id="uc031upx.2">
    <molecule id="Q86X60-1"/>
    <property type="organism name" value="human"/>
</dbReference>
<dbReference type="AGR" id="HGNC:24805"/>
<dbReference type="CTD" id="653820"/>
<dbReference type="DisGeNET" id="653820"/>
<dbReference type="GeneCards" id="FAM72B"/>
<dbReference type="HGNC" id="HGNC:24805">
    <property type="gene designation" value="FAM72B"/>
</dbReference>
<dbReference type="HPA" id="ENSG00000188610">
    <property type="expression patterns" value="Tissue enhanced (bone marrow, lymphoid tissue)"/>
</dbReference>
<dbReference type="MIM" id="614711">
    <property type="type" value="gene"/>
</dbReference>
<dbReference type="neXtProt" id="NX_Q86X60"/>
<dbReference type="OpenTargets" id="ENSG00000188610"/>
<dbReference type="PharmGKB" id="PA142671834"/>
<dbReference type="VEuPathDB" id="HostDB:ENSG00000188610"/>
<dbReference type="eggNOG" id="ENOG502S1HA">
    <property type="taxonomic scope" value="Eukaryota"/>
</dbReference>
<dbReference type="GeneTree" id="ENSGT00390000005106"/>
<dbReference type="HOGENOM" id="CLU_2176611_0_0_1"/>
<dbReference type="InParanoid" id="Q86X60"/>
<dbReference type="OMA" id="TQVNCVY"/>
<dbReference type="OrthoDB" id="2526683at2759"/>
<dbReference type="PAN-GO" id="Q86X60">
    <property type="GO annotations" value="1 GO annotation based on evolutionary models"/>
</dbReference>
<dbReference type="PhylomeDB" id="Q86X60"/>
<dbReference type="TreeFam" id="TF329231"/>
<dbReference type="PathwayCommons" id="Q86X60"/>
<dbReference type="SignaLink" id="Q86X60"/>
<dbReference type="BioGRID-ORCS" id="653820">
    <property type="hits" value="334 hits in 679 CRISPR screens"/>
</dbReference>
<dbReference type="ChiTaRS" id="FAM72B">
    <property type="organism name" value="human"/>
</dbReference>
<dbReference type="GenomeRNAi" id="653820"/>
<dbReference type="Pharos" id="Q86X60">
    <property type="development level" value="Tdark"/>
</dbReference>
<dbReference type="PRO" id="PR:Q86X60"/>
<dbReference type="Proteomes" id="UP000005640">
    <property type="component" value="Chromosome 1"/>
</dbReference>
<dbReference type="RNAct" id="Q86X60">
    <property type="molecule type" value="protein"/>
</dbReference>
<dbReference type="Bgee" id="ENSG00000188610">
    <property type="expression patterns" value="Expressed in primordial germ cell in gonad and 100 other cell types or tissues"/>
</dbReference>
<dbReference type="ExpressionAtlas" id="Q86X60">
    <property type="expression patterns" value="baseline and differential"/>
</dbReference>
<dbReference type="GO" id="GO:0005829">
    <property type="term" value="C:cytosol"/>
    <property type="evidence" value="ECO:0000314"/>
    <property type="project" value="HPA"/>
</dbReference>
<dbReference type="GO" id="GO:0043231">
    <property type="term" value="C:intracellular membrane-bounded organelle"/>
    <property type="evidence" value="ECO:0000314"/>
    <property type="project" value="HPA"/>
</dbReference>
<dbReference type="InterPro" id="IPR026768">
    <property type="entry name" value="YPEH2ZP"/>
</dbReference>
<dbReference type="PANTHER" id="PTHR31841">
    <property type="entry name" value="PROTEIN FAM72A-RELATED"/>
    <property type="match status" value="1"/>
</dbReference>
<dbReference type="PANTHER" id="PTHR31841:SF1">
    <property type="entry name" value="PROTEIN FAM72A-RELATED"/>
    <property type="match status" value="1"/>
</dbReference>
<dbReference type="Pfam" id="PF14976">
    <property type="entry name" value="YPEH2ZP"/>
    <property type="match status" value="1"/>
</dbReference>
<proteinExistence type="evidence at protein level"/>